<keyword id="KW-0067">ATP-binding</keyword>
<keyword id="KW-0143">Chaperone</keyword>
<keyword id="KW-0963">Cytoplasm</keyword>
<keyword id="KW-0547">Nucleotide-binding</keyword>
<keyword id="KW-0346">Stress response</keyword>
<evidence type="ECO:0000255" key="1">
    <source>
        <dbReference type="HAMAP-Rule" id="MF_00249"/>
    </source>
</evidence>
<sequence>MEQLTPRETVRELDRYIVGQNQAKRAVAIALRNRYRRSLLPEGMQEEVLPKNILMIGPTGVGKTEIARRLAKLVRAPFLKVEATKFTEVGYVGRDVESIVRDLVEISLRMVKAEKMEEVEIQAAQAAEKRLEALLVPGKRQENNSSNPFQFLFNQGQEKEETVTPEIERDRTFIRERLHRGELDEQVIEVEVEDNQPLLPDFLGTGMEINTNLQDMMAGMLPKKRHKRKVTVREARRILTTEEAQKLIDHDEAVQEAIRRVEQEGMVFLDEIDKIAGRDGASGPDVSRGGVQRDILPIVEGSTINTKYGPVKTDHILFIAAGAFHVAKPSDLIPELQGRFPIRVELESLSIEDFQRILTEPQSSLIKQYSALLETEGIKVEFTENAIDELAKVAYEVNSNTENIGARRLHTIVERVLEELSFEASELPEDYTVTINREYIQHRLGNIVRNQDLSRYIL</sequence>
<reference key="1">
    <citation type="journal article" date="2012" name="BMC Microbiol.">
        <title>Genome sequence of Desulfitobacterium hafniense DCB-2, a Gram-positive anaerobe capable of dehalogenation and metal reduction.</title>
        <authorList>
            <person name="Kim S.H."/>
            <person name="Harzman C."/>
            <person name="Davis J.K."/>
            <person name="Hutcheson R."/>
            <person name="Broderick J.B."/>
            <person name="Marsh T.L."/>
            <person name="Tiedje J.M."/>
        </authorList>
    </citation>
    <scope>NUCLEOTIDE SEQUENCE [LARGE SCALE GENOMIC DNA]</scope>
    <source>
        <strain>DSM 10664 / DCB-2</strain>
    </source>
</reference>
<accession>B8FRG8</accession>
<proteinExistence type="inferred from homology"/>
<name>HSLU_DESHD</name>
<comment type="function">
    <text evidence="1">ATPase subunit of a proteasome-like degradation complex; this subunit has chaperone activity. The binding of ATP and its subsequent hydrolysis by HslU are essential for unfolding of protein substrates subsequently hydrolyzed by HslV. HslU recognizes the N-terminal part of its protein substrates and unfolds these before they are guided to HslV for hydrolysis.</text>
</comment>
<comment type="subunit">
    <text evidence="1">A double ring-shaped homohexamer of HslV is capped on each side by a ring-shaped HslU homohexamer. The assembly of the HslU/HslV complex is dependent on binding of ATP.</text>
</comment>
<comment type="subcellular location">
    <subcellularLocation>
        <location evidence="1">Cytoplasm</location>
    </subcellularLocation>
</comment>
<comment type="similarity">
    <text evidence="1">Belongs to the ClpX chaperone family. HslU subfamily.</text>
</comment>
<gene>
    <name evidence="1" type="primary">hslU</name>
    <name type="ordered locus">Dhaf_3712</name>
</gene>
<protein>
    <recommendedName>
        <fullName evidence="1">ATP-dependent protease ATPase subunit HslU</fullName>
    </recommendedName>
    <alternativeName>
        <fullName evidence="1">Unfoldase HslU</fullName>
    </alternativeName>
</protein>
<organism>
    <name type="scientific">Desulfitobacterium hafniense (strain DSM 10664 / DCB-2)</name>
    <dbReference type="NCBI Taxonomy" id="272564"/>
    <lineage>
        <taxon>Bacteria</taxon>
        <taxon>Bacillati</taxon>
        <taxon>Bacillota</taxon>
        <taxon>Clostridia</taxon>
        <taxon>Eubacteriales</taxon>
        <taxon>Desulfitobacteriaceae</taxon>
        <taxon>Desulfitobacterium</taxon>
    </lineage>
</organism>
<feature type="chain" id="PRO_1000125435" description="ATP-dependent protease ATPase subunit HslU">
    <location>
        <begin position="1"/>
        <end position="458"/>
    </location>
</feature>
<feature type="binding site" evidence="1">
    <location>
        <position position="18"/>
    </location>
    <ligand>
        <name>ATP</name>
        <dbReference type="ChEBI" id="CHEBI:30616"/>
    </ligand>
</feature>
<feature type="binding site" evidence="1">
    <location>
        <begin position="60"/>
        <end position="65"/>
    </location>
    <ligand>
        <name>ATP</name>
        <dbReference type="ChEBI" id="CHEBI:30616"/>
    </ligand>
</feature>
<feature type="binding site" evidence="1">
    <location>
        <position position="270"/>
    </location>
    <ligand>
        <name>ATP</name>
        <dbReference type="ChEBI" id="CHEBI:30616"/>
    </ligand>
</feature>
<feature type="binding site" evidence="1">
    <location>
        <position position="335"/>
    </location>
    <ligand>
        <name>ATP</name>
        <dbReference type="ChEBI" id="CHEBI:30616"/>
    </ligand>
</feature>
<feature type="binding site" evidence="1">
    <location>
        <position position="407"/>
    </location>
    <ligand>
        <name>ATP</name>
        <dbReference type="ChEBI" id="CHEBI:30616"/>
    </ligand>
</feature>
<dbReference type="EMBL" id="CP001336">
    <property type="protein sequence ID" value="ACL21728.1"/>
    <property type="molecule type" value="Genomic_DNA"/>
</dbReference>
<dbReference type="RefSeq" id="WP_005810678.1">
    <property type="nucleotide sequence ID" value="NC_011830.1"/>
</dbReference>
<dbReference type="SMR" id="B8FRG8"/>
<dbReference type="KEGG" id="dhd:Dhaf_3712"/>
<dbReference type="HOGENOM" id="CLU_033123_0_0_9"/>
<dbReference type="Proteomes" id="UP000007726">
    <property type="component" value="Chromosome"/>
</dbReference>
<dbReference type="GO" id="GO:0009376">
    <property type="term" value="C:HslUV protease complex"/>
    <property type="evidence" value="ECO:0007669"/>
    <property type="project" value="UniProtKB-UniRule"/>
</dbReference>
<dbReference type="GO" id="GO:0005524">
    <property type="term" value="F:ATP binding"/>
    <property type="evidence" value="ECO:0007669"/>
    <property type="project" value="UniProtKB-UniRule"/>
</dbReference>
<dbReference type="GO" id="GO:0016887">
    <property type="term" value="F:ATP hydrolysis activity"/>
    <property type="evidence" value="ECO:0007669"/>
    <property type="project" value="InterPro"/>
</dbReference>
<dbReference type="GO" id="GO:0008233">
    <property type="term" value="F:peptidase activity"/>
    <property type="evidence" value="ECO:0007669"/>
    <property type="project" value="InterPro"/>
</dbReference>
<dbReference type="GO" id="GO:0036402">
    <property type="term" value="F:proteasome-activating activity"/>
    <property type="evidence" value="ECO:0007669"/>
    <property type="project" value="UniProtKB-UniRule"/>
</dbReference>
<dbReference type="GO" id="GO:0043335">
    <property type="term" value="P:protein unfolding"/>
    <property type="evidence" value="ECO:0007669"/>
    <property type="project" value="UniProtKB-UniRule"/>
</dbReference>
<dbReference type="GO" id="GO:0051603">
    <property type="term" value="P:proteolysis involved in protein catabolic process"/>
    <property type="evidence" value="ECO:0007669"/>
    <property type="project" value="TreeGrafter"/>
</dbReference>
<dbReference type="CDD" id="cd19498">
    <property type="entry name" value="RecA-like_HslU"/>
    <property type="match status" value="1"/>
</dbReference>
<dbReference type="FunFam" id="3.40.50.300:FF:000213">
    <property type="entry name" value="ATP-dependent protease ATPase subunit HslU"/>
    <property type="match status" value="1"/>
</dbReference>
<dbReference type="FunFam" id="3.40.50.300:FF:000220">
    <property type="entry name" value="ATP-dependent protease ATPase subunit HslU"/>
    <property type="match status" value="1"/>
</dbReference>
<dbReference type="Gene3D" id="1.10.8.60">
    <property type="match status" value="1"/>
</dbReference>
<dbReference type="Gene3D" id="1.10.8.10">
    <property type="entry name" value="DNA helicase RuvA subunit, C-terminal domain"/>
    <property type="match status" value="2"/>
</dbReference>
<dbReference type="Gene3D" id="3.40.50.300">
    <property type="entry name" value="P-loop containing nucleotide triphosphate hydrolases"/>
    <property type="match status" value="2"/>
</dbReference>
<dbReference type="HAMAP" id="MF_00249">
    <property type="entry name" value="HslU"/>
    <property type="match status" value="1"/>
</dbReference>
<dbReference type="InterPro" id="IPR003593">
    <property type="entry name" value="AAA+_ATPase"/>
</dbReference>
<dbReference type="InterPro" id="IPR050052">
    <property type="entry name" value="ATP-dep_Clp_protease_ClpX"/>
</dbReference>
<dbReference type="InterPro" id="IPR003959">
    <property type="entry name" value="ATPase_AAA_core"/>
</dbReference>
<dbReference type="InterPro" id="IPR019489">
    <property type="entry name" value="Clp_ATPase_C"/>
</dbReference>
<dbReference type="InterPro" id="IPR004491">
    <property type="entry name" value="HslU"/>
</dbReference>
<dbReference type="InterPro" id="IPR027417">
    <property type="entry name" value="P-loop_NTPase"/>
</dbReference>
<dbReference type="NCBIfam" id="TIGR00390">
    <property type="entry name" value="hslU"/>
    <property type="match status" value="1"/>
</dbReference>
<dbReference type="NCBIfam" id="NF003544">
    <property type="entry name" value="PRK05201.1"/>
    <property type="match status" value="1"/>
</dbReference>
<dbReference type="PANTHER" id="PTHR48102">
    <property type="entry name" value="ATP-DEPENDENT CLP PROTEASE ATP-BINDING SUBUNIT CLPX-LIKE, MITOCHONDRIAL-RELATED"/>
    <property type="match status" value="1"/>
</dbReference>
<dbReference type="PANTHER" id="PTHR48102:SF3">
    <property type="entry name" value="ATP-DEPENDENT PROTEASE ATPASE SUBUNIT HSLU"/>
    <property type="match status" value="1"/>
</dbReference>
<dbReference type="Pfam" id="PF00004">
    <property type="entry name" value="AAA"/>
    <property type="match status" value="1"/>
</dbReference>
<dbReference type="Pfam" id="PF07724">
    <property type="entry name" value="AAA_2"/>
    <property type="match status" value="1"/>
</dbReference>
<dbReference type="Pfam" id="PF10431">
    <property type="entry name" value="ClpB_D2-small"/>
    <property type="match status" value="1"/>
</dbReference>
<dbReference type="SMART" id="SM00382">
    <property type="entry name" value="AAA"/>
    <property type="match status" value="1"/>
</dbReference>
<dbReference type="SMART" id="SM01086">
    <property type="entry name" value="ClpB_D2-small"/>
    <property type="match status" value="1"/>
</dbReference>
<dbReference type="SUPFAM" id="SSF52540">
    <property type="entry name" value="P-loop containing nucleoside triphosphate hydrolases"/>
    <property type="match status" value="1"/>
</dbReference>